<sequence length="306" mass="34652">MRHFLTLKDFNKEELLEMIALAQKIKAQTKQKQFVPYLERQTLGMIFEKSSTRTRVSFETGIYQLGGIGLFLSANDIQLGRGEPMKDTSRVISRMVDMVMIRTFEQSKLEEFAAYSKVPVINGLTDSYHPVQLMTDYLTMIEFGKADDPICAYVGDGNNMTHSWLMLAAKLGFELRVATPKGYECDPDIVADAMEIAKESGAKITFGNDPKEAVKGCDVVTTDTWVSMGQEDEKEIRLKAFEGYMVDEAMMSLAKSDAIFLHCLPAYRGYEVSEETFEKHAEVIFTEAENRLHAQKGIMVWLDQHC</sequence>
<gene>
    <name evidence="2" type="primary">argF</name>
    <name type="ordered locus">SUN_2090</name>
</gene>
<proteinExistence type="inferred from homology"/>
<feature type="chain" id="PRO_1000084864" description="Ornithine carbamoyltransferase">
    <location>
        <begin position="1"/>
        <end position="306"/>
    </location>
</feature>
<feature type="binding site" evidence="2">
    <location>
        <begin position="51"/>
        <end position="54"/>
    </location>
    <ligand>
        <name>carbamoyl phosphate</name>
        <dbReference type="ChEBI" id="CHEBI:58228"/>
    </ligand>
</feature>
<feature type="binding site" evidence="2">
    <location>
        <position position="78"/>
    </location>
    <ligand>
        <name>carbamoyl phosphate</name>
        <dbReference type="ChEBI" id="CHEBI:58228"/>
    </ligand>
</feature>
<feature type="binding site" evidence="2">
    <location>
        <position position="102"/>
    </location>
    <ligand>
        <name>carbamoyl phosphate</name>
        <dbReference type="ChEBI" id="CHEBI:58228"/>
    </ligand>
</feature>
<feature type="binding site" evidence="2">
    <location>
        <begin position="129"/>
        <end position="132"/>
    </location>
    <ligand>
        <name>carbamoyl phosphate</name>
        <dbReference type="ChEBI" id="CHEBI:58228"/>
    </ligand>
</feature>
<feature type="binding site" evidence="2">
    <location>
        <position position="159"/>
    </location>
    <ligand>
        <name>L-ornithine</name>
        <dbReference type="ChEBI" id="CHEBI:46911"/>
    </ligand>
</feature>
<feature type="binding site" evidence="2">
    <location>
        <position position="223"/>
    </location>
    <ligand>
        <name>L-ornithine</name>
        <dbReference type="ChEBI" id="CHEBI:46911"/>
    </ligand>
</feature>
<feature type="binding site" evidence="2">
    <location>
        <begin position="227"/>
        <end position="228"/>
    </location>
    <ligand>
        <name>L-ornithine</name>
        <dbReference type="ChEBI" id="CHEBI:46911"/>
    </ligand>
</feature>
<feature type="binding site" evidence="2">
    <location>
        <begin position="263"/>
        <end position="264"/>
    </location>
    <ligand>
        <name>carbamoyl phosphate</name>
        <dbReference type="ChEBI" id="CHEBI:58228"/>
    </ligand>
</feature>
<feature type="binding site" evidence="2">
    <location>
        <position position="291"/>
    </location>
    <ligand>
        <name>carbamoyl phosphate</name>
        <dbReference type="ChEBI" id="CHEBI:58228"/>
    </ligand>
</feature>
<reference key="1">
    <citation type="journal article" date="2007" name="Proc. Natl. Acad. Sci. U.S.A.">
        <title>Deep-sea vent epsilon-proteobacterial genomes provide insights into emergence of pathogens.</title>
        <authorList>
            <person name="Nakagawa S."/>
            <person name="Takaki Y."/>
            <person name="Shimamura S."/>
            <person name="Reysenbach A.-L."/>
            <person name="Takai K."/>
            <person name="Horikoshi K."/>
        </authorList>
    </citation>
    <scope>NUCLEOTIDE SEQUENCE [LARGE SCALE GENOMIC DNA]</scope>
    <source>
        <strain>NBC37-1</strain>
    </source>
</reference>
<accession>A6QC22</accession>
<organism>
    <name type="scientific">Sulfurovum sp. (strain NBC37-1)</name>
    <dbReference type="NCBI Taxonomy" id="387093"/>
    <lineage>
        <taxon>Bacteria</taxon>
        <taxon>Pseudomonadati</taxon>
        <taxon>Campylobacterota</taxon>
        <taxon>Epsilonproteobacteria</taxon>
        <taxon>Campylobacterales</taxon>
        <taxon>Sulfurovaceae</taxon>
        <taxon>Sulfurovum</taxon>
    </lineage>
</organism>
<evidence type="ECO:0000250" key="1"/>
<evidence type="ECO:0000255" key="2">
    <source>
        <dbReference type="HAMAP-Rule" id="MF_01109"/>
    </source>
</evidence>
<comment type="function">
    <text evidence="1">Reversibly catalyzes the transfer of the carbamoyl group from carbamoyl phosphate (CP) to the N(epsilon) atom of ornithine (ORN) to produce L-citrulline.</text>
</comment>
<comment type="catalytic activity">
    <reaction evidence="2">
        <text>carbamoyl phosphate + L-ornithine = L-citrulline + phosphate + H(+)</text>
        <dbReference type="Rhea" id="RHEA:19513"/>
        <dbReference type="ChEBI" id="CHEBI:15378"/>
        <dbReference type="ChEBI" id="CHEBI:43474"/>
        <dbReference type="ChEBI" id="CHEBI:46911"/>
        <dbReference type="ChEBI" id="CHEBI:57743"/>
        <dbReference type="ChEBI" id="CHEBI:58228"/>
        <dbReference type="EC" id="2.1.3.3"/>
    </reaction>
</comment>
<comment type="pathway">
    <text evidence="2">Amino-acid biosynthesis; L-arginine biosynthesis; L-arginine from L-ornithine and carbamoyl phosphate: step 1/3.</text>
</comment>
<comment type="subcellular location">
    <subcellularLocation>
        <location evidence="2">Cytoplasm</location>
    </subcellularLocation>
</comment>
<comment type="similarity">
    <text evidence="2">Belongs to the aspartate/ornithine carbamoyltransferase superfamily. OTCase family.</text>
</comment>
<dbReference type="EC" id="2.1.3.3" evidence="2"/>
<dbReference type="EMBL" id="AP009179">
    <property type="protein sequence ID" value="BAF73031.1"/>
    <property type="molecule type" value="Genomic_DNA"/>
</dbReference>
<dbReference type="RefSeq" id="WP_012083857.1">
    <property type="nucleotide sequence ID" value="NC_009663.1"/>
</dbReference>
<dbReference type="SMR" id="A6QC22"/>
<dbReference type="STRING" id="387093.SUN_2090"/>
<dbReference type="KEGG" id="sun:SUN_2090"/>
<dbReference type="eggNOG" id="COG0078">
    <property type="taxonomic scope" value="Bacteria"/>
</dbReference>
<dbReference type="HOGENOM" id="CLU_043846_3_2_7"/>
<dbReference type="OrthoDB" id="9802587at2"/>
<dbReference type="UniPathway" id="UPA00068">
    <property type="reaction ID" value="UER00112"/>
</dbReference>
<dbReference type="Proteomes" id="UP000006378">
    <property type="component" value="Chromosome"/>
</dbReference>
<dbReference type="GO" id="GO:0005737">
    <property type="term" value="C:cytoplasm"/>
    <property type="evidence" value="ECO:0007669"/>
    <property type="project" value="UniProtKB-SubCell"/>
</dbReference>
<dbReference type="GO" id="GO:0016597">
    <property type="term" value="F:amino acid binding"/>
    <property type="evidence" value="ECO:0007669"/>
    <property type="project" value="InterPro"/>
</dbReference>
<dbReference type="GO" id="GO:0004585">
    <property type="term" value="F:ornithine carbamoyltransferase activity"/>
    <property type="evidence" value="ECO:0007669"/>
    <property type="project" value="UniProtKB-UniRule"/>
</dbReference>
<dbReference type="GO" id="GO:0042450">
    <property type="term" value="P:arginine biosynthetic process via ornithine"/>
    <property type="evidence" value="ECO:0007669"/>
    <property type="project" value="TreeGrafter"/>
</dbReference>
<dbReference type="GO" id="GO:0019240">
    <property type="term" value="P:citrulline biosynthetic process"/>
    <property type="evidence" value="ECO:0007669"/>
    <property type="project" value="TreeGrafter"/>
</dbReference>
<dbReference type="GO" id="GO:0006526">
    <property type="term" value="P:L-arginine biosynthetic process"/>
    <property type="evidence" value="ECO:0007669"/>
    <property type="project" value="UniProtKB-UniRule"/>
</dbReference>
<dbReference type="FunFam" id="3.40.50.1370:FF:000008">
    <property type="entry name" value="Ornithine carbamoyltransferase"/>
    <property type="match status" value="1"/>
</dbReference>
<dbReference type="Gene3D" id="3.40.50.1370">
    <property type="entry name" value="Aspartate/ornithine carbamoyltransferase"/>
    <property type="match status" value="2"/>
</dbReference>
<dbReference type="HAMAP" id="MF_01109">
    <property type="entry name" value="OTCase"/>
    <property type="match status" value="1"/>
</dbReference>
<dbReference type="InterPro" id="IPR006132">
    <property type="entry name" value="Asp/Orn_carbamoyltranf_P-bd"/>
</dbReference>
<dbReference type="InterPro" id="IPR006130">
    <property type="entry name" value="Asp/Orn_carbamoylTrfase"/>
</dbReference>
<dbReference type="InterPro" id="IPR036901">
    <property type="entry name" value="Asp/Orn_carbamoylTrfase_sf"/>
</dbReference>
<dbReference type="InterPro" id="IPR006131">
    <property type="entry name" value="Asp_carbamoyltransf_Asp/Orn-bd"/>
</dbReference>
<dbReference type="InterPro" id="IPR002292">
    <property type="entry name" value="Orn/put_carbamltrans"/>
</dbReference>
<dbReference type="InterPro" id="IPR024904">
    <property type="entry name" value="OTCase_ArgI"/>
</dbReference>
<dbReference type="NCBIfam" id="TIGR00658">
    <property type="entry name" value="orni_carb_tr"/>
    <property type="match status" value="1"/>
</dbReference>
<dbReference type="NCBIfam" id="NF001986">
    <property type="entry name" value="PRK00779.1"/>
    <property type="match status" value="1"/>
</dbReference>
<dbReference type="PANTHER" id="PTHR45753">
    <property type="entry name" value="ORNITHINE CARBAMOYLTRANSFERASE, MITOCHONDRIAL"/>
    <property type="match status" value="1"/>
</dbReference>
<dbReference type="PANTHER" id="PTHR45753:SF3">
    <property type="entry name" value="ORNITHINE TRANSCARBAMYLASE, MITOCHONDRIAL"/>
    <property type="match status" value="1"/>
</dbReference>
<dbReference type="Pfam" id="PF00185">
    <property type="entry name" value="OTCace"/>
    <property type="match status" value="1"/>
</dbReference>
<dbReference type="Pfam" id="PF02729">
    <property type="entry name" value="OTCace_N"/>
    <property type="match status" value="1"/>
</dbReference>
<dbReference type="PRINTS" id="PR00100">
    <property type="entry name" value="AOTCASE"/>
</dbReference>
<dbReference type="PRINTS" id="PR00102">
    <property type="entry name" value="OTCASE"/>
</dbReference>
<dbReference type="SUPFAM" id="SSF53671">
    <property type="entry name" value="Aspartate/ornithine carbamoyltransferase"/>
    <property type="match status" value="1"/>
</dbReference>
<dbReference type="PROSITE" id="PS00097">
    <property type="entry name" value="CARBAMOYLTRANSFERASE"/>
    <property type="match status" value="1"/>
</dbReference>
<keyword id="KW-0028">Amino-acid biosynthesis</keyword>
<keyword id="KW-0055">Arginine biosynthesis</keyword>
<keyword id="KW-0963">Cytoplasm</keyword>
<keyword id="KW-0808">Transferase</keyword>
<name>OTC_SULNB</name>
<protein>
    <recommendedName>
        <fullName evidence="2">Ornithine carbamoyltransferase</fullName>
        <shortName evidence="2">OTCase</shortName>
        <ecNumber evidence="2">2.1.3.3</ecNumber>
    </recommendedName>
</protein>